<sequence length="397" mass="42868">MTTLLNPYFGEFGGMYVPQILMPALNQLEEAFVSAQKDPEFQAQFADLLKNYAGRPTALTKCQNITAGTRTTLYLKREDLLHGGAHKTNQVLGQALLAKRMGKSEIIAETGAGQHGVASALASALLGLKCRIYMGAKDVERQSPNVFRMRLMGAEVIPVHSGSATLKDACNEALRDWSGSYETAHYMLGTAAGPHPYPTIVREFQRMIGEETKAQILDKEGRLPDAVIACVGGGSNAIGMFADFINDTSVGLIGVEPGGHGIETGEHGAPLKHGRVGIYFGMKAPMMQTADGQIEESYSISAGLDFPSVGPQHAYLNSIGRADYVSITDDEALEAFKTLCRHEGIIPALESSHALAHALKMMREQPEKEQLLVVNLSGRGDKDIFTVHDILKARGEI</sequence>
<dbReference type="EC" id="4.2.1.20" evidence="1"/>
<dbReference type="EMBL" id="AM933172">
    <property type="protein sequence ID" value="CAR32886.1"/>
    <property type="molecule type" value="Genomic_DNA"/>
</dbReference>
<dbReference type="RefSeq" id="WP_000209485.1">
    <property type="nucleotide sequence ID" value="NC_011294.1"/>
</dbReference>
<dbReference type="SMR" id="B5R3P4"/>
<dbReference type="KEGG" id="set:SEN1308"/>
<dbReference type="HOGENOM" id="CLU_016734_3_1_6"/>
<dbReference type="UniPathway" id="UPA00035">
    <property type="reaction ID" value="UER00044"/>
</dbReference>
<dbReference type="Proteomes" id="UP000000613">
    <property type="component" value="Chromosome"/>
</dbReference>
<dbReference type="GO" id="GO:0005737">
    <property type="term" value="C:cytoplasm"/>
    <property type="evidence" value="ECO:0007669"/>
    <property type="project" value="TreeGrafter"/>
</dbReference>
<dbReference type="GO" id="GO:0004834">
    <property type="term" value="F:tryptophan synthase activity"/>
    <property type="evidence" value="ECO:0007669"/>
    <property type="project" value="UniProtKB-UniRule"/>
</dbReference>
<dbReference type="CDD" id="cd06446">
    <property type="entry name" value="Trp-synth_B"/>
    <property type="match status" value="1"/>
</dbReference>
<dbReference type="FunFam" id="3.40.50.1100:FF:000001">
    <property type="entry name" value="Tryptophan synthase beta chain"/>
    <property type="match status" value="1"/>
</dbReference>
<dbReference type="FunFam" id="3.40.50.1100:FF:000004">
    <property type="entry name" value="Tryptophan synthase beta chain"/>
    <property type="match status" value="1"/>
</dbReference>
<dbReference type="Gene3D" id="3.40.50.1100">
    <property type="match status" value="2"/>
</dbReference>
<dbReference type="HAMAP" id="MF_00133">
    <property type="entry name" value="Trp_synth_beta"/>
    <property type="match status" value="1"/>
</dbReference>
<dbReference type="InterPro" id="IPR006653">
    <property type="entry name" value="Trp_synth_b_CS"/>
</dbReference>
<dbReference type="InterPro" id="IPR006654">
    <property type="entry name" value="Trp_synth_beta"/>
</dbReference>
<dbReference type="InterPro" id="IPR023026">
    <property type="entry name" value="Trp_synth_beta/beta-like"/>
</dbReference>
<dbReference type="InterPro" id="IPR001926">
    <property type="entry name" value="TrpB-like_PALP"/>
</dbReference>
<dbReference type="InterPro" id="IPR036052">
    <property type="entry name" value="TrpB-like_PALP_sf"/>
</dbReference>
<dbReference type="NCBIfam" id="TIGR00263">
    <property type="entry name" value="trpB"/>
    <property type="match status" value="1"/>
</dbReference>
<dbReference type="PANTHER" id="PTHR48077:SF3">
    <property type="entry name" value="TRYPTOPHAN SYNTHASE"/>
    <property type="match status" value="1"/>
</dbReference>
<dbReference type="PANTHER" id="PTHR48077">
    <property type="entry name" value="TRYPTOPHAN SYNTHASE-RELATED"/>
    <property type="match status" value="1"/>
</dbReference>
<dbReference type="Pfam" id="PF00291">
    <property type="entry name" value="PALP"/>
    <property type="match status" value="1"/>
</dbReference>
<dbReference type="PIRSF" id="PIRSF001413">
    <property type="entry name" value="Trp_syn_beta"/>
    <property type="match status" value="1"/>
</dbReference>
<dbReference type="SUPFAM" id="SSF53686">
    <property type="entry name" value="Tryptophan synthase beta subunit-like PLP-dependent enzymes"/>
    <property type="match status" value="1"/>
</dbReference>
<dbReference type="PROSITE" id="PS00168">
    <property type="entry name" value="TRP_SYNTHASE_BETA"/>
    <property type="match status" value="1"/>
</dbReference>
<proteinExistence type="inferred from homology"/>
<organism>
    <name type="scientific">Salmonella enteritidis PT4 (strain P125109)</name>
    <dbReference type="NCBI Taxonomy" id="550537"/>
    <lineage>
        <taxon>Bacteria</taxon>
        <taxon>Pseudomonadati</taxon>
        <taxon>Pseudomonadota</taxon>
        <taxon>Gammaproteobacteria</taxon>
        <taxon>Enterobacterales</taxon>
        <taxon>Enterobacteriaceae</taxon>
        <taxon>Salmonella</taxon>
    </lineage>
</organism>
<comment type="function">
    <text evidence="1">The beta subunit is responsible for the synthesis of L-tryptophan from indole and L-serine.</text>
</comment>
<comment type="catalytic activity">
    <reaction evidence="1">
        <text>(1S,2R)-1-C-(indol-3-yl)glycerol 3-phosphate + L-serine = D-glyceraldehyde 3-phosphate + L-tryptophan + H2O</text>
        <dbReference type="Rhea" id="RHEA:10532"/>
        <dbReference type="ChEBI" id="CHEBI:15377"/>
        <dbReference type="ChEBI" id="CHEBI:33384"/>
        <dbReference type="ChEBI" id="CHEBI:57912"/>
        <dbReference type="ChEBI" id="CHEBI:58866"/>
        <dbReference type="ChEBI" id="CHEBI:59776"/>
        <dbReference type="EC" id="4.2.1.20"/>
    </reaction>
</comment>
<comment type="cofactor">
    <cofactor evidence="1">
        <name>pyridoxal 5'-phosphate</name>
        <dbReference type="ChEBI" id="CHEBI:597326"/>
    </cofactor>
</comment>
<comment type="pathway">
    <text evidence="1">Amino-acid biosynthesis; L-tryptophan biosynthesis; L-tryptophan from chorismate: step 5/5.</text>
</comment>
<comment type="subunit">
    <text evidence="1">Tetramer of two alpha and two beta chains.</text>
</comment>
<comment type="similarity">
    <text evidence="1">Belongs to the TrpB family.</text>
</comment>
<accession>B5R3P4</accession>
<reference key="1">
    <citation type="journal article" date="2008" name="Genome Res.">
        <title>Comparative genome analysis of Salmonella enteritidis PT4 and Salmonella gallinarum 287/91 provides insights into evolutionary and host adaptation pathways.</title>
        <authorList>
            <person name="Thomson N.R."/>
            <person name="Clayton D.J."/>
            <person name="Windhorst D."/>
            <person name="Vernikos G."/>
            <person name="Davidson S."/>
            <person name="Churcher C."/>
            <person name="Quail M.A."/>
            <person name="Stevens M."/>
            <person name="Jones M.A."/>
            <person name="Watson M."/>
            <person name="Barron A."/>
            <person name="Layton A."/>
            <person name="Pickard D."/>
            <person name="Kingsley R.A."/>
            <person name="Bignell A."/>
            <person name="Clark L."/>
            <person name="Harris B."/>
            <person name="Ormond D."/>
            <person name="Abdellah Z."/>
            <person name="Brooks K."/>
            <person name="Cherevach I."/>
            <person name="Chillingworth T."/>
            <person name="Woodward J."/>
            <person name="Norberczak H."/>
            <person name="Lord A."/>
            <person name="Arrowsmith C."/>
            <person name="Jagels K."/>
            <person name="Moule S."/>
            <person name="Mungall K."/>
            <person name="Saunders M."/>
            <person name="Whitehead S."/>
            <person name="Chabalgoity J.A."/>
            <person name="Maskell D."/>
            <person name="Humphreys T."/>
            <person name="Roberts M."/>
            <person name="Barrow P.A."/>
            <person name="Dougan G."/>
            <person name="Parkhill J."/>
        </authorList>
    </citation>
    <scope>NUCLEOTIDE SEQUENCE [LARGE SCALE GENOMIC DNA]</scope>
    <source>
        <strain>P125109</strain>
    </source>
</reference>
<name>TRPB_SALEP</name>
<keyword id="KW-0028">Amino-acid biosynthesis</keyword>
<keyword id="KW-0057">Aromatic amino acid biosynthesis</keyword>
<keyword id="KW-0456">Lyase</keyword>
<keyword id="KW-0663">Pyridoxal phosphate</keyword>
<keyword id="KW-0822">Tryptophan biosynthesis</keyword>
<evidence type="ECO:0000255" key="1">
    <source>
        <dbReference type="HAMAP-Rule" id="MF_00133"/>
    </source>
</evidence>
<gene>
    <name evidence="1" type="primary">trpB</name>
    <name type="ordered locus">SEN1308</name>
</gene>
<protein>
    <recommendedName>
        <fullName evidence="1">Tryptophan synthase beta chain</fullName>
        <ecNumber evidence="1">4.2.1.20</ecNumber>
    </recommendedName>
</protein>
<feature type="chain" id="PRO_1000095817" description="Tryptophan synthase beta chain">
    <location>
        <begin position="1"/>
        <end position="397"/>
    </location>
</feature>
<feature type="modified residue" description="N6-(pyridoxal phosphate)lysine" evidence="1">
    <location>
        <position position="87"/>
    </location>
</feature>